<organism>
    <name type="scientific">Anaeromyxobacter dehalogenans (strain 2CP-C)</name>
    <dbReference type="NCBI Taxonomy" id="290397"/>
    <lineage>
        <taxon>Bacteria</taxon>
        <taxon>Pseudomonadati</taxon>
        <taxon>Myxococcota</taxon>
        <taxon>Myxococcia</taxon>
        <taxon>Myxococcales</taxon>
        <taxon>Cystobacterineae</taxon>
        <taxon>Anaeromyxobacteraceae</taxon>
        <taxon>Anaeromyxobacter</taxon>
    </lineage>
</organism>
<sequence length="433" mass="45437">MSDVLFIEGGRVIDPAGGVDGVRTVVIRDGKVAEVAERVERPRDARVLDARNRWVTPGFVDLHVHLREPGQEYKETVATGARAAVAGGFTAVCAMPNTKPVNDCAAVTELVLARAAAAGLARVYPVGAISKGSGGEELAEYGELKASGCVALSDDGRPVMSSALMRRALEYARAFGLPLTVHEEDLHLVGKGVMHEGAAATRLGLKGIPSQAEDVMVLRDIALVELTGGRLHVAHVSTAGAVRAIREAKRRGLPVTGEVTPHHLALTDDDVAASGYSTDFKMNPPLRSADDVRACREGLADGTLDAIATDHAPHSAVEKDVEFDAAANGIVGLETAFSVCLGLVREGALTERRLVEALTAGPARVFGLPAGTLARGAAADVAVLDAAAEWTLDPARLQSKGRNTPWKGRRLAGRCTHTIVGGRIVHEEGKADR</sequence>
<comment type="function">
    <text evidence="1">Catalyzes the reversible cyclization of carbamoyl aspartate to dihydroorotate.</text>
</comment>
<comment type="catalytic activity">
    <reaction evidence="1">
        <text>(S)-dihydroorotate + H2O = N-carbamoyl-L-aspartate + H(+)</text>
        <dbReference type="Rhea" id="RHEA:24296"/>
        <dbReference type="ChEBI" id="CHEBI:15377"/>
        <dbReference type="ChEBI" id="CHEBI:15378"/>
        <dbReference type="ChEBI" id="CHEBI:30864"/>
        <dbReference type="ChEBI" id="CHEBI:32814"/>
        <dbReference type="EC" id="3.5.2.3"/>
    </reaction>
</comment>
<comment type="cofactor">
    <cofactor evidence="1">
        <name>Zn(2+)</name>
        <dbReference type="ChEBI" id="CHEBI:29105"/>
    </cofactor>
    <text evidence="1">Binds 2 Zn(2+) ions per subunit.</text>
</comment>
<comment type="pathway">
    <text evidence="1">Pyrimidine metabolism; UMP biosynthesis via de novo pathway; (S)-dihydroorotate from bicarbonate: step 3/3.</text>
</comment>
<comment type="similarity">
    <text evidence="1">Belongs to the metallo-dependent hydrolases superfamily. DHOase family. Class I DHOase subfamily.</text>
</comment>
<name>PYRC_ANADE</name>
<reference key="1">
    <citation type="submission" date="2006-01" db="EMBL/GenBank/DDBJ databases">
        <title>Complete sequence of Anaeromyxobacter dehalogenans 2CP-C.</title>
        <authorList>
            <person name="Copeland A."/>
            <person name="Lucas S."/>
            <person name="Lapidus A."/>
            <person name="Barry K."/>
            <person name="Detter J.C."/>
            <person name="Glavina T."/>
            <person name="Hammon N."/>
            <person name="Israni S."/>
            <person name="Pitluck S."/>
            <person name="Brettin T."/>
            <person name="Bruce D."/>
            <person name="Han C."/>
            <person name="Tapia R."/>
            <person name="Gilna P."/>
            <person name="Kiss H."/>
            <person name="Schmutz J."/>
            <person name="Larimer F."/>
            <person name="Land M."/>
            <person name="Kyrpides N."/>
            <person name="Anderson I."/>
            <person name="Sanford R.A."/>
            <person name="Ritalahti K.M."/>
            <person name="Thomas H.S."/>
            <person name="Kirby J.R."/>
            <person name="Zhulin I.B."/>
            <person name="Loeffler F.E."/>
            <person name="Richardson P."/>
        </authorList>
    </citation>
    <scope>NUCLEOTIDE SEQUENCE [LARGE SCALE GENOMIC DNA]</scope>
    <source>
        <strain>2CP-C</strain>
    </source>
</reference>
<evidence type="ECO:0000255" key="1">
    <source>
        <dbReference type="HAMAP-Rule" id="MF_00220"/>
    </source>
</evidence>
<feature type="chain" id="PRO_0000325580" description="Dihydroorotase">
    <location>
        <begin position="1"/>
        <end position="433"/>
    </location>
</feature>
<feature type="active site" evidence="1">
    <location>
        <position position="310"/>
    </location>
</feature>
<feature type="binding site" evidence="1">
    <location>
        <position position="63"/>
    </location>
    <ligand>
        <name>Zn(2+)</name>
        <dbReference type="ChEBI" id="CHEBI:29105"/>
        <label>1</label>
    </ligand>
</feature>
<feature type="binding site" evidence="1">
    <location>
        <begin position="65"/>
        <end position="67"/>
    </location>
    <ligand>
        <name>substrate</name>
    </ligand>
</feature>
<feature type="binding site" evidence="1">
    <location>
        <position position="65"/>
    </location>
    <ligand>
        <name>Zn(2+)</name>
        <dbReference type="ChEBI" id="CHEBI:29105"/>
        <label>1</label>
    </ligand>
</feature>
<feature type="binding site" evidence="1">
    <location>
        <position position="97"/>
    </location>
    <ligand>
        <name>substrate</name>
    </ligand>
</feature>
<feature type="binding site" evidence="1">
    <location>
        <position position="155"/>
    </location>
    <ligand>
        <name>Zn(2+)</name>
        <dbReference type="ChEBI" id="CHEBI:29105"/>
        <label>1</label>
    </ligand>
</feature>
<feature type="binding site" evidence="1">
    <location>
        <position position="155"/>
    </location>
    <ligand>
        <name>Zn(2+)</name>
        <dbReference type="ChEBI" id="CHEBI:29105"/>
        <label>2</label>
    </ligand>
</feature>
<feature type="binding site" evidence="1">
    <location>
        <position position="182"/>
    </location>
    <ligand>
        <name>Zn(2+)</name>
        <dbReference type="ChEBI" id="CHEBI:29105"/>
        <label>2</label>
    </ligand>
</feature>
<feature type="binding site" evidence="1">
    <location>
        <position position="235"/>
    </location>
    <ligand>
        <name>Zn(2+)</name>
        <dbReference type="ChEBI" id="CHEBI:29105"/>
        <label>2</label>
    </ligand>
</feature>
<feature type="binding site" evidence="1">
    <location>
        <position position="283"/>
    </location>
    <ligand>
        <name>substrate</name>
    </ligand>
</feature>
<feature type="binding site" evidence="1">
    <location>
        <position position="310"/>
    </location>
    <ligand>
        <name>Zn(2+)</name>
        <dbReference type="ChEBI" id="CHEBI:29105"/>
        <label>1</label>
    </ligand>
</feature>
<feature type="binding site" evidence="1">
    <location>
        <position position="314"/>
    </location>
    <ligand>
        <name>substrate</name>
    </ligand>
</feature>
<gene>
    <name evidence="1" type="primary">pyrC</name>
    <name type="ordered locus">Adeh_1619</name>
</gene>
<accession>Q2IIB0</accession>
<proteinExistence type="inferred from homology"/>
<dbReference type="EC" id="3.5.2.3" evidence="1"/>
<dbReference type="EMBL" id="CP000251">
    <property type="protein sequence ID" value="ABC81392.1"/>
    <property type="molecule type" value="Genomic_DNA"/>
</dbReference>
<dbReference type="RefSeq" id="WP_011420675.1">
    <property type="nucleotide sequence ID" value="NC_007760.1"/>
</dbReference>
<dbReference type="SMR" id="Q2IIB0"/>
<dbReference type="STRING" id="290397.Adeh_1619"/>
<dbReference type="KEGG" id="ade:Adeh_1619"/>
<dbReference type="eggNOG" id="COG0044">
    <property type="taxonomic scope" value="Bacteria"/>
</dbReference>
<dbReference type="HOGENOM" id="CLU_015572_1_0_7"/>
<dbReference type="OrthoDB" id="9803027at2"/>
<dbReference type="UniPathway" id="UPA00070">
    <property type="reaction ID" value="UER00117"/>
</dbReference>
<dbReference type="Proteomes" id="UP000001935">
    <property type="component" value="Chromosome"/>
</dbReference>
<dbReference type="GO" id="GO:0005737">
    <property type="term" value="C:cytoplasm"/>
    <property type="evidence" value="ECO:0007669"/>
    <property type="project" value="TreeGrafter"/>
</dbReference>
<dbReference type="GO" id="GO:0004038">
    <property type="term" value="F:allantoinase activity"/>
    <property type="evidence" value="ECO:0007669"/>
    <property type="project" value="TreeGrafter"/>
</dbReference>
<dbReference type="GO" id="GO:0004151">
    <property type="term" value="F:dihydroorotase activity"/>
    <property type="evidence" value="ECO:0007669"/>
    <property type="project" value="UniProtKB-UniRule"/>
</dbReference>
<dbReference type="GO" id="GO:0008270">
    <property type="term" value="F:zinc ion binding"/>
    <property type="evidence" value="ECO:0007669"/>
    <property type="project" value="UniProtKB-UniRule"/>
</dbReference>
<dbReference type="GO" id="GO:0044205">
    <property type="term" value="P:'de novo' UMP biosynthetic process"/>
    <property type="evidence" value="ECO:0007669"/>
    <property type="project" value="UniProtKB-UniRule"/>
</dbReference>
<dbReference type="GO" id="GO:0006145">
    <property type="term" value="P:purine nucleobase catabolic process"/>
    <property type="evidence" value="ECO:0007669"/>
    <property type="project" value="TreeGrafter"/>
</dbReference>
<dbReference type="CDD" id="cd01317">
    <property type="entry name" value="DHOase_IIa"/>
    <property type="match status" value="1"/>
</dbReference>
<dbReference type="Gene3D" id="3.20.20.140">
    <property type="entry name" value="Metal-dependent hydrolases"/>
    <property type="match status" value="1"/>
</dbReference>
<dbReference type="Gene3D" id="2.30.40.10">
    <property type="entry name" value="Urease, subunit C, domain 1"/>
    <property type="match status" value="1"/>
</dbReference>
<dbReference type="HAMAP" id="MF_00220_B">
    <property type="entry name" value="PyrC_classI_B"/>
    <property type="match status" value="1"/>
</dbReference>
<dbReference type="InterPro" id="IPR006680">
    <property type="entry name" value="Amidohydro-rel"/>
</dbReference>
<dbReference type="InterPro" id="IPR004722">
    <property type="entry name" value="DHOase"/>
</dbReference>
<dbReference type="InterPro" id="IPR050138">
    <property type="entry name" value="DHOase/Allantoinase_Hydrolase"/>
</dbReference>
<dbReference type="InterPro" id="IPR002195">
    <property type="entry name" value="Dihydroorotase_CS"/>
</dbReference>
<dbReference type="InterPro" id="IPR011059">
    <property type="entry name" value="Metal-dep_hydrolase_composite"/>
</dbReference>
<dbReference type="InterPro" id="IPR032466">
    <property type="entry name" value="Metal_Hydrolase"/>
</dbReference>
<dbReference type="NCBIfam" id="TIGR00857">
    <property type="entry name" value="pyrC_multi"/>
    <property type="match status" value="1"/>
</dbReference>
<dbReference type="PANTHER" id="PTHR43668">
    <property type="entry name" value="ALLANTOINASE"/>
    <property type="match status" value="1"/>
</dbReference>
<dbReference type="PANTHER" id="PTHR43668:SF2">
    <property type="entry name" value="ALLANTOINASE"/>
    <property type="match status" value="1"/>
</dbReference>
<dbReference type="Pfam" id="PF01979">
    <property type="entry name" value="Amidohydro_1"/>
    <property type="match status" value="1"/>
</dbReference>
<dbReference type="SUPFAM" id="SSF51338">
    <property type="entry name" value="Composite domain of metallo-dependent hydrolases"/>
    <property type="match status" value="1"/>
</dbReference>
<dbReference type="SUPFAM" id="SSF51556">
    <property type="entry name" value="Metallo-dependent hydrolases"/>
    <property type="match status" value="1"/>
</dbReference>
<dbReference type="PROSITE" id="PS00482">
    <property type="entry name" value="DIHYDROOROTASE_1"/>
    <property type="match status" value="1"/>
</dbReference>
<dbReference type="PROSITE" id="PS00483">
    <property type="entry name" value="DIHYDROOROTASE_2"/>
    <property type="match status" value="1"/>
</dbReference>
<keyword id="KW-0378">Hydrolase</keyword>
<keyword id="KW-0479">Metal-binding</keyword>
<keyword id="KW-0665">Pyrimidine biosynthesis</keyword>
<keyword id="KW-1185">Reference proteome</keyword>
<keyword id="KW-0862">Zinc</keyword>
<protein>
    <recommendedName>
        <fullName evidence="1">Dihydroorotase</fullName>
        <shortName evidence="1">DHOase</shortName>
        <ecNumber evidence="1">3.5.2.3</ecNumber>
    </recommendedName>
</protein>